<reference key="1">
    <citation type="journal article" date="1997" name="Science">
        <title>The complete genome sequence of Escherichia coli K-12.</title>
        <authorList>
            <person name="Blattner F.R."/>
            <person name="Plunkett G. III"/>
            <person name="Bloch C.A."/>
            <person name="Perna N.T."/>
            <person name="Burland V."/>
            <person name="Riley M."/>
            <person name="Collado-Vides J."/>
            <person name="Glasner J.D."/>
            <person name="Rode C.K."/>
            <person name="Mayhew G.F."/>
            <person name="Gregor J."/>
            <person name="Davis N.W."/>
            <person name="Kirkpatrick H.A."/>
            <person name="Goeden M.A."/>
            <person name="Rose D.J."/>
            <person name="Mau B."/>
            <person name="Shao Y."/>
        </authorList>
    </citation>
    <scope>NUCLEOTIDE SEQUENCE [LARGE SCALE GENOMIC DNA]</scope>
    <source>
        <strain>K12 / MG1655 / ATCC 47076</strain>
    </source>
</reference>
<reference key="2">
    <citation type="journal article" date="2006" name="Mol. Syst. Biol.">
        <title>Highly accurate genome sequences of Escherichia coli K-12 strains MG1655 and W3110.</title>
        <authorList>
            <person name="Hayashi K."/>
            <person name="Morooka N."/>
            <person name="Yamamoto Y."/>
            <person name="Fujita K."/>
            <person name="Isono K."/>
            <person name="Choi S."/>
            <person name="Ohtsubo E."/>
            <person name="Baba T."/>
            <person name="Wanner B.L."/>
            <person name="Mori H."/>
            <person name="Horiuchi T."/>
        </authorList>
    </citation>
    <scope>NUCLEOTIDE SEQUENCE [LARGE SCALE GENOMIC DNA]</scope>
    <source>
        <strain>K12 / W3110 / ATCC 27325 / DSM 5911</strain>
    </source>
</reference>
<name>YAAY_ECOLI</name>
<feature type="chain" id="PRO_0000168521" description="Uncharacterized protein YaaY">
    <location>
        <begin position="1"/>
        <end position="72"/>
    </location>
</feature>
<protein>
    <recommendedName>
        <fullName>Uncharacterized protein YaaY</fullName>
    </recommendedName>
</protein>
<organism>
    <name type="scientific">Escherichia coli (strain K12)</name>
    <dbReference type="NCBI Taxonomy" id="83333"/>
    <lineage>
        <taxon>Bacteria</taxon>
        <taxon>Pseudomonadati</taxon>
        <taxon>Pseudomonadota</taxon>
        <taxon>Gammaproteobacteria</taxon>
        <taxon>Enterobacterales</taxon>
        <taxon>Enterobacteriaceae</taxon>
        <taxon>Escherichia</taxon>
    </lineage>
</organism>
<sequence length="72" mass="7890">MCRHSLRSDGAGFYQLAGCEYSFSAIKIAAGGQFLPVICAMAMKSHFFLISVLNRRLTLTAVQGILGRFSLF</sequence>
<dbReference type="EMBL" id="U00096">
    <property type="protein sequence ID" value="AAC73135.1"/>
    <property type="molecule type" value="Genomic_DNA"/>
</dbReference>
<dbReference type="EMBL" id="AP009048">
    <property type="protein sequence ID" value="BAE76035.1"/>
    <property type="molecule type" value="Genomic_DNA"/>
</dbReference>
<dbReference type="PIR" id="H64722">
    <property type="entry name" value="H64722"/>
</dbReference>
<dbReference type="RefSeq" id="NP_414565.1">
    <property type="nucleotide sequence ID" value="NC_000913.3"/>
</dbReference>
<dbReference type="RefSeq" id="WP_001300728.1">
    <property type="nucleotide sequence ID" value="NZ_SSZK01000004.1"/>
</dbReference>
<dbReference type="BioGRID" id="4261557">
    <property type="interactions" value="5"/>
</dbReference>
<dbReference type="FunCoup" id="P75620">
    <property type="interactions" value="15"/>
</dbReference>
<dbReference type="STRING" id="511145.b0024"/>
<dbReference type="PaxDb" id="511145-b0024"/>
<dbReference type="EnsemblBacteria" id="AAC73135">
    <property type="protein sequence ID" value="AAC73135"/>
    <property type="gene ID" value="b0024"/>
</dbReference>
<dbReference type="GeneID" id="949128"/>
<dbReference type="KEGG" id="ecj:JW5003"/>
<dbReference type="KEGG" id="eco:b0024"/>
<dbReference type="KEGG" id="ecoc:C3026_00115"/>
<dbReference type="PATRIC" id="fig|511145.12.peg.21"/>
<dbReference type="EchoBASE" id="EB4129"/>
<dbReference type="eggNOG" id="ENOG503397J">
    <property type="taxonomic scope" value="Bacteria"/>
</dbReference>
<dbReference type="HOGENOM" id="CLU_2716372_0_0_6"/>
<dbReference type="InParanoid" id="P75620"/>
<dbReference type="OMA" id="RYTRTIF"/>
<dbReference type="OrthoDB" id="6626498at2"/>
<dbReference type="PhylomeDB" id="P75620"/>
<dbReference type="BioCyc" id="EcoCyc:G6087-MONOMER"/>
<dbReference type="PRO" id="PR:P75620"/>
<dbReference type="Proteomes" id="UP000000625">
    <property type="component" value="Chromosome"/>
</dbReference>
<dbReference type="GO" id="GO:0006974">
    <property type="term" value="P:DNA damage response"/>
    <property type="evidence" value="ECO:0000315"/>
    <property type="project" value="EcoCyc"/>
</dbReference>
<dbReference type="AntiFam" id="ANF00260">
    <property type="entry name" value="Protein of unknown function (DUF2575)"/>
</dbReference>
<keyword id="KW-1185">Reference proteome</keyword>
<proteinExistence type="predicted"/>
<accession>P75620</accession>
<accession>Q2MCH1</accession>
<gene>
    <name type="primary">yaaY</name>
    <name type="ordered locus">b0024</name>
    <name type="ordered locus">JW5003</name>
</gene>